<keyword id="KW-0010">Activator</keyword>
<keyword id="KW-1005">Bacterial flagellum biogenesis</keyword>
<keyword id="KW-0963">Cytoplasm</keyword>
<keyword id="KW-1015">Disulfide bond</keyword>
<keyword id="KW-0238">DNA-binding</keyword>
<keyword id="KW-1185">Reference proteome</keyword>
<keyword id="KW-0804">Transcription</keyword>
<keyword id="KW-0805">Transcription regulation</keyword>
<proteinExistence type="inferred from homology"/>
<gene>
    <name evidence="1" type="primary">flhD</name>
    <name type="ordered locus">Ecok1_17470</name>
    <name type="ORF">APECO1_940</name>
</gene>
<dbReference type="EMBL" id="CP000468">
    <property type="protein sequence ID" value="ABJ01241.1"/>
    <property type="molecule type" value="Genomic_DNA"/>
</dbReference>
<dbReference type="SMR" id="A1AC51"/>
<dbReference type="KEGG" id="ecv:APECO1_940"/>
<dbReference type="HOGENOM" id="CLU_144160_0_0_6"/>
<dbReference type="Proteomes" id="UP000008216">
    <property type="component" value="Chromosome"/>
</dbReference>
<dbReference type="GO" id="GO:0005737">
    <property type="term" value="C:cytoplasm"/>
    <property type="evidence" value="ECO:0007669"/>
    <property type="project" value="UniProtKB-SubCell"/>
</dbReference>
<dbReference type="GO" id="GO:0003677">
    <property type="term" value="F:DNA binding"/>
    <property type="evidence" value="ECO:0007669"/>
    <property type="project" value="UniProtKB-UniRule"/>
</dbReference>
<dbReference type="GO" id="GO:0044780">
    <property type="term" value="P:bacterial-type flagellum assembly"/>
    <property type="evidence" value="ECO:0007669"/>
    <property type="project" value="InterPro"/>
</dbReference>
<dbReference type="GO" id="GO:0045893">
    <property type="term" value="P:positive regulation of DNA-templated transcription"/>
    <property type="evidence" value="ECO:0007669"/>
    <property type="project" value="InterPro"/>
</dbReference>
<dbReference type="GO" id="GO:1902208">
    <property type="term" value="P:regulation of bacterial-type flagellum assembly"/>
    <property type="evidence" value="ECO:0007669"/>
    <property type="project" value="UniProtKB-UniRule"/>
</dbReference>
<dbReference type="FunFam" id="1.10.4000.10:FF:000001">
    <property type="entry name" value="Flagellar transcriptional regulator FlhD"/>
    <property type="match status" value="1"/>
</dbReference>
<dbReference type="Gene3D" id="1.10.4000.10">
    <property type="entry name" value="Flagellar transcriptional activator FlhD"/>
    <property type="match status" value="1"/>
</dbReference>
<dbReference type="HAMAP" id="MF_00725">
    <property type="entry name" value="FlhD"/>
    <property type="match status" value="1"/>
</dbReference>
<dbReference type="InterPro" id="IPR023559">
    <property type="entry name" value="Flagellar_FlhD"/>
</dbReference>
<dbReference type="InterPro" id="IPR036194">
    <property type="entry name" value="FlhD_sf"/>
</dbReference>
<dbReference type="NCBIfam" id="NF002783">
    <property type="entry name" value="PRK02909.1-1"/>
    <property type="match status" value="1"/>
</dbReference>
<dbReference type="Pfam" id="PF05247">
    <property type="entry name" value="FlhD"/>
    <property type="match status" value="1"/>
</dbReference>
<dbReference type="SUPFAM" id="SSF63592">
    <property type="entry name" value="Flagellar transcriptional activator FlhD"/>
    <property type="match status" value="1"/>
</dbReference>
<sequence>MGIMHTSELLKHIYDINLSYLLLAQRLIVQDKASAMFRLGINEEMATTLAALTLPQMVKLAETNQLVCHFRFDSHQTITQLTQDSRVDDLQQIHTGIMLSTRLLNDVNQPEEALRKKRA</sequence>
<evidence type="ECO:0000255" key="1">
    <source>
        <dbReference type="HAMAP-Rule" id="MF_00725"/>
    </source>
</evidence>
<protein>
    <recommendedName>
        <fullName evidence="1">Flagellar transcriptional regulator FlhD</fullName>
    </recommendedName>
</protein>
<reference key="1">
    <citation type="journal article" date="2007" name="J. Bacteriol.">
        <title>The genome sequence of avian pathogenic Escherichia coli strain O1:K1:H7 shares strong similarities with human extraintestinal pathogenic E. coli genomes.</title>
        <authorList>
            <person name="Johnson T.J."/>
            <person name="Kariyawasam S."/>
            <person name="Wannemuehler Y."/>
            <person name="Mangiamele P."/>
            <person name="Johnson S.J."/>
            <person name="Doetkott C."/>
            <person name="Skyberg J.A."/>
            <person name="Lynne A.M."/>
            <person name="Johnson J.R."/>
            <person name="Nolan L.K."/>
        </authorList>
    </citation>
    <scope>NUCLEOTIDE SEQUENCE [LARGE SCALE GENOMIC DNA]</scope>
</reference>
<comment type="function">
    <text evidence="1">Functions in complex with FlhC as a master transcriptional regulator that regulates transcription of several flagellar and non-flagellar operons by binding to their promoter region. Activates expression of class 2 flagellar genes, including fliA, which is a flagellum-specific sigma factor that turns on the class 3 genes. Also regulates genes whose products function in a variety of physiological pathways.</text>
</comment>
<comment type="subunit">
    <text evidence="1">Homodimer; disulfide-linked. Forms a heterohexamer composed of two FlhC and four FlhD subunits. Each FlhC binds a FlhD dimer, forming a heterotrimer, and a hexamer assembles by dimerization of two heterotrimers.</text>
</comment>
<comment type="subcellular location">
    <subcellularLocation>
        <location evidence="1">Cytoplasm</location>
    </subcellularLocation>
</comment>
<comment type="domain">
    <text evidence="1">The C-terminal region contains a putative helix-turn-helix (HTH) motif, suggesting that this region may bind DNA.</text>
</comment>
<comment type="similarity">
    <text evidence="1">Belongs to the FlhD family.</text>
</comment>
<accession>A1AC51</accession>
<feature type="chain" id="PRO_1000062099" description="Flagellar transcriptional regulator FlhD">
    <location>
        <begin position="1"/>
        <end position="119"/>
    </location>
</feature>
<feature type="disulfide bond" description="Interchain" evidence="1">
    <location>
        <position position="68"/>
    </location>
</feature>
<name>FLHD_ECOK1</name>
<organism>
    <name type="scientific">Escherichia coli O1:K1 / APEC</name>
    <dbReference type="NCBI Taxonomy" id="405955"/>
    <lineage>
        <taxon>Bacteria</taxon>
        <taxon>Pseudomonadati</taxon>
        <taxon>Pseudomonadota</taxon>
        <taxon>Gammaproteobacteria</taxon>
        <taxon>Enterobacterales</taxon>
        <taxon>Enterobacteriaceae</taxon>
        <taxon>Escherichia</taxon>
    </lineage>
</organism>